<reference key="1">
    <citation type="journal article" date="1994" name="Nature">
        <title>2.2 Mb of contiguous nucleotide sequence from chromosome III of C. elegans.</title>
        <authorList>
            <person name="Wilson R."/>
            <person name="Ainscough R."/>
            <person name="Anderson K."/>
            <person name="Baynes C."/>
            <person name="Berks M."/>
            <person name="Bonfield J."/>
            <person name="Burton J."/>
            <person name="Connell M."/>
            <person name="Copsey T."/>
            <person name="Cooper J."/>
            <person name="Coulson A."/>
            <person name="Craxton M."/>
            <person name="Dear S."/>
            <person name="Du Z."/>
            <person name="Durbin R."/>
            <person name="Favello A."/>
            <person name="Fraser A."/>
            <person name="Fulton L."/>
            <person name="Gardner A."/>
            <person name="Green P."/>
            <person name="Hawkins T."/>
            <person name="Hillier L."/>
            <person name="Jier M."/>
            <person name="Johnston L."/>
            <person name="Jones M."/>
            <person name="Kershaw J."/>
            <person name="Kirsten J."/>
            <person name="Laisster N."/>
            <person name="Latreille P."/>
            <person name="Lightning J."/>
            <person name="Lloyd C."/>
            <person name="Mortimore B."/>
            <person name="O'Callaghan M."/>
            <person name="Parsons J."/>
            <person name="Percy C."/>
            <person name="Rifken L."/>
            <person name="Roopra A."/>
            <person name="Saunders D."/>
            <person name="Shownkeen R."/>
            <person name="Sims M."/>
            <person name="Smaldon N."/>
            <person name="Smith A."/>
            <person name="Smith M."/>
            <person name="Sonnhammer E."/>
            <person name="Staden R."/>
            <person name="Sulston J."/>
            <person name="Thierry-Mieg J."/>
            <person name="Thomas K."/>
            <person name="Vaudin M."/>
            <person name="Vaughan K."/>
            <person name="Waterston R."/>
            <person name="Watson A."/>
            <person name="Weinstock L."/>
            <person name="Wilkinson-Sproat J."/>
            <person name="Wohldman P."/>
        </authorList>
    </citation>
    <scope>NUCLEOTIDE SEQUENCE [LARGE SCALE GENOMIC DNA]</scope>
    <source>
        <strain>Bristol N2</strain>
    </source>
</reference>
<reference key="2">
    <citation type="journal article" date="1998" name="Science">
        <title>Genome sequence of the nematode C. elegans: a platform for investigating biology.</title>
        <authorList>
            <consortium name="The C. elegans sequencing consortium"/>
        </authorList>
    </citation>
    <scope>NUCLEOTIDE SEQUENCE [LARGE SCALE GENOMIC DNA]</scope>
    <source>
        <strain>Bristol N2</strain>
    </source>
</reference>
<reference key="3">
    <citation type="journal article" date="2012" name="Nucleic Acids Res.">
        <title>The Caenorhabditis elegans GW182 protein AIN-1 interacts with PAB-1 and subunits of the PAN2-PAN3 and CCR4-NOT deadenylase complexes.</title>
        <authorList>
            <person name="Kuzuoglu-Ozturk D."/>
            <person name="Huntzinger E."/>
            <person name="Schmidt S."/>
            <person name="Izaurralde E."/>
        </authorList>
    </citation>
    <scope>INTERACTION WITH AIN-1</scope>
</reference>
<reference key="4">
    <citation type="journal article" date="2013" name="J. Cell Sci.">
        <title>The Ccr4-Not deadenylase complex constitutes the main poly(A) removal activity in C. elegans.</title>
        <authorList>
            <person name="Nousch M."/>
            <person name="Techritz N."/>
            <person name="Hampel D."/>
            <person name="Millonigg S."/>
            <person name="Eckmann C.R."/>
        </authorList>
    </citation>
    <scope>FUNCTION</scope>
    <scope>TISSUE SPECIFICITY</scope>
</reference>
<organism>
    <name type="scientific">Caenorhabditis elegans</name>
    <dbReference type="NCBI Taxonomy" id="6239"/>
    <lineage>
        <taxon>Eukaryota</taxon>
        <taxon>Metazoa</taxon>
        <taxon>Ecdysozoa</taxon>
        <taxon>Nematoda</taxon>
        <taxon>Chromadorea</taxon>
        <taxon>Rhabditida</taxon>
        <taxon>Rhabditina</taxon>
        <taxon>Rhabditomorpha</taxon>
        <taxon>Rhabditoidea</taxon>
        <taxon>Rhabditidae</taxon>
        <taxon>Peloderinae</taxon>
        <taxon>Caenorhabditis</taxon>
    </lineage>
</organism>
<proteinExistence type="evidence at protein level"/>
<accession>P34653</accession>
<keyword id="KW-0067">ATP-binding</keyword>
<keyword id="KW-0175">Coiled coil</keyword>
<keyword id="KW-0963">Cytoplasm</keyword>
<keyword id="KW-0507">mRNA processing</keyword>
<keyword id="KW-0547">Nucleotide-binding</keyword>
<keyword id="KW-1185">Reference proteome</keyword>
<comment type="function">
    <text evidence="1 4">Regulatory subunit of the poly(A)-nuclease (PAN) deadenylation complex, one of two cytoplasmic mRNA deadenylases involved in general and miRNA-mediated mRNA turnover. PAN specifically shortens poly(A) tails of RNA and the activity is stimulated by poly(A)-binding protein (PABP). PAN deadenylation is followed by rapid degradation of the shortened mRNA tails by the CCR4-NOT complex. Deadenylated mRNAs are then degraded by two alternative mechanisms, namely exosome-mediated 3'-5' exonucleolytic degradation, or deadenylation-dependent mRNA decaping and subsequent 5'-3' exonucleolytic degradation by XRN1. PAN3 acts as a positive regulator for PAN activity, recruiting the catalytic subunit PAN2 to mRNA via its interaction with RNA and PABP, and to miRNA targets via its interaction with GW182 family proteins. Within the PAN complex, may positively regulate fertility (PubMed:23843623).</text>
</comment>
<comment type="subunit">
    <text evidence="1 3">Homodimer. Forms a heterotrimer with a catalytic subunit PAN2 to form the poly(A)-nuclease (PAN) deadenylation complex. Interacts (via PAM-2 motif) with poly(A)-binding protein (via PABC domain), conferring substrate specificity of the enzyme complex (By similarity). Interacts with the GW182 family protein ain-1 (PubMed:22402495).</text>
</comment>
<comment type="subcellular location">
    <subcellularLocation>
        <location evidence="1">Cytoplasm</location>
        <location evidence="1">P-body</location>
    </subcellularLocation>
</comment>
<comment type="tissue specificity">
    <text evidence="4">Highly expressed in germ cells.</text>
</comment>
<comment type="domain">
    <text evidence="1">The N-terminal zinc finger binds to poly(A) RNA.</text>
</comment>
<comment type="domain">
    <text evidence="1">Contains a pseudokinase domain. The protein kinase domain is predicted to be catalytically inactive because some of the residues important for catalytic activity are substituted and it lacks the equivalent of the binding site for a peptide substrate. However, it has retained an ATP-binding site and ATP-binding is required for mRNA degradation, stimulating the activity of the PAN2 nuclease in vitro. The nucleotide-binding site is juxtaposed to the RNase active site of PAN2 in the complex and may actually bind nucleosides of a poly(A) RNA rather than ATP, feeding the poly(A)-tail to the active site of the deadenylase and thus increasing the efficiency with which this distributive enzyme degrades oligo(A) RNAs.</text>
</comment>
<comment type="domain">
    <text evidence="1">The pseudokinase domain, the coiled-coil (CC), and C-terminal knob domain (CK) form a structural unit (PKC) that forms an extensive high-affinity interaction surface for PAN2.</text>
</comment>
<comment type="similarity">
    <text evidence="1">Belongs to the protein kinase superfamily. PAN3 family.</text>
</comment>
<sequence>MQPGEGYHYDSGPNNAVHPHQLPAGSRLNQYLANNNRQGPSFGPGTPINVNAPVFVPKHQQPQPAQVAAPPPMVNQFAQLSIHDVPHQMIPFGQINGPPTFGPGQHMNHRASHHHQSPQMAQQPPTLQQSAYDRYQLENRGGTTYFYTEPTEAGPDDEQYTEAEAPDGSILVNTPGAFGYNAPLPISHMARFRGKANANLQTQFISPEIRMELINRQLAYDTKADSAIIGDIPHSVEHFSNLVPLEIAGIQSQTTYKAFSCRDGNYYCLRRIHGNRIQHPGKQTHLVEQWKKLVHGNVVPLREVLINCRAFDDSSLIFAYDYYPLAGTLMEKHFDTKSGTFFDPNNGFRISSPMNVSMPISGTGAHETLIWSYIIQIAAALRAIHSSGLACRTLDLNKIITYGNKIMISFCGIQDVLDPDPTTIQQQQNEDLNMFGNLIVALATGRANGWRKDLYQQLKKFIEDTYSMDLRNVIGFLHNNSTRKTINEIMPMIGGRFFTVMENMQAKTDVLEAELSREMENGRLFRLVAKMNTVLERVEHGTDDAWSETGDRFMLKLFRDYVFHQVTDQGKAWLDMAHIVQCLNKLDCGSQEKIEMVSRSGDTQIIIDYATLKRCLDKSFRDLLGTNMMLHR</sequence>
<protein>
    <recommendedName>
        <fullName evidence="1">PAN2-PAN3 deadenylation complex subunit PAN3</fullName>
    </recommendedName>
    <alternativeName>
        <fullName evidence="1">PAB1P-dependent poly(A)-specific ribonuclease</fullName>
    </alternativeName>
    <alternativeName>
        <fullName evidence="1">Poly(A)-nuclease deadenylation complex subunit 3</fullName>
        <shortName evidence="1">PAN deadenylation complex subunit 3</shortName>
    </alternativeName>
</protein>
<feature type="chain" id="PRO_0000065524" description="PAN2-PAN3 deadenylation complex subunit PAN3">
    <location>
        <begin position="1"/>
        <end position="632"/>
    </location>
</feature>
<feature type="region of interest" description="Disordered" evidence="2">
    <location>
        <begin position="1"/>
        <end position="22"/>
    </location>
</feature>
<feature type="region of interest" description="Disordered" evidence="2">
    <location>
        <begin position="99"/>
        <end position="127"/>
    </location>
</feature>
<feature type="region of interest" description="Pseudokinase domain" evidence="1">
    <location>
        <begin position="223"/>
        <end position="494"/>
    </location>
</feature>
<feature type="region of interest" description="Knob domain" evidence="1">
    <location>
        <begin position="534"/>
        <end position="632"/>
    </location>
</feature>
<feature type="coiled-coil region" evidence="1">
    <location>
        <begin position="495"/>
        <end position="533"/>
    </location>
</feature>
<feature type="compositionally biased region" description="Basic residues" evidence="2">
    <location>
        <begin position="107"/>
        <end position="116"/>
    </location>
</feature>
<feature type="compositionally biased region" description="Polar residues" evidence="2">
    <location>
        <begin position="117"/>
        <end position="127"/>
    </location>
</feature>
<feature type="binding site" evidence="1">
    <location>
        <position position="270"/>
    </location>
    <ligand>
        <name>ATP</name>
        <dbReference type="ChEBI" id="CHEBI:30616"/>
    </ligand>
</feature>
<feature type="binding site" evidence="1">
    <location>
        <begin position="321"/>
        <end position="328"/>
    </location>
    <ligand>
        <name>ATP</name>
        <dbReference type="ChEBI" id="CHEBI:30616"/>
    </ligand>
</feature>
<feature type="binding site" evidence="1">
    <location>
        <begin position="397"/>
        <end position="398"/>
    </location>
    <ligand>
        <name>ATP</name>
        <dbReference type="ChEBI" id="CHEBI:30616"/>
    </ligand>
</feature>
<evidence type="ECO:0000255" key="1">
    <source>
        <dbReference type="HAMAP-Rule" id="MF_03181"/>
    </source>
</evidence>
<evidence type="ECO:0000256" key="2">
    <source>
        <dbReference type="SAM" id="MobiDB-lite"/>
    </source>
</evidence>
<evidence type="ECO:0000269" key="3">
    <source>
    </source>
</evidence>
<evidence type="ECO:0000269" key="4">
    <source>
    </source>
</evidence>
<evidence type="ECO:0000312" key="5">
    <source>
        <dbReference type="WormBase" id="ZK632.7"/>
    </source>
</evidence>
<dbReference type="EMBL" id="BX284603">
    <property type="protein sequence ID" value="CAA80184.3"/>
    <property type="molecule type" value="Genomic_DNA"/>
</dbReference>
<dbReference type="PIR" id="S40939">
    <property type="entry name" value="S40939"/>
</dbReference>
<dbReference type="RefSeq" id="NP_499177.3">
    <property type="nucleotide sequence ID" value="NM_066776.5"/>
</dbReference>
<dbReference type="SMR" id="P34653"/>
<dbReference type="BioGRID" id="41585">
    <property type="interactions" value="4"/>
</dbReference>
<dbReference type="ComplexPortal" id="CPX-653">
    <property type="entry name" value="PAN2-PAN3 mRNA deadenylation complex"/>
</dbReference>
<dbReference type="DIP" id="DIP-24759N"/>
<dbReference type="FunCoup" id="P34653">
    <property type="interactions" value="3119"/>
</dbReference>
<dbReference type="IntAct" id="P34653">
    <property type="interactions" value="2"/>
</dbReference>
<dbReference type="MINT" id="P34653"/>
<dbReference type="STRING" id="6239.ZK632.7.1"/>
<dbReference type="PaxDb" id="6239-ZK632.7"/>
<dbReference type="PeptideAtlas" id="P34653"/>
<dbReference type="EnsemblMetazoa" id="ZK632.7.1">
    <property type="protein sequence ID" value="ZK632.7.1"/>
    <property type="gene ID" value="WBGene00014015"/>
</dbReference>
<dbReference type="EnsemblMetazoa" id="ZK632.7.2">
    <property type="protein sequence ID" value="ZK632.7.2"/>
    <property type="gene ID" value="WBGene00014015"/>
</dbReference>
<dbReference type="GeneID" id="176391"/>
<dbReference type="KEGG" id="cel:CELE_ZK632.7"/>
<dbReference type="UCSC" id="ZK632.7">
    <property type="organism name" value="c. elegans"/>
</dbReference>
<dbReference type="AGR" id="WB:WBGene00014015"/>
<dbReference type="CTD" id="176391"/>
<dbReference type="WormBase" id="ZK632.7">
    <property type="protein sequence ID" value="CE37601"/>
    <property type="gene ID" value="WBGene00014015"/>
    <property type="gene designation" value="panl-3"/>
</dbReference>
<dbReference type="eggNOG" id="KOG3741">
    <property type="taxonomic scope" value="Eukaryota"/>
</dbReference>
<dbReference type="GeneTree" id="ENSGT00390000001504"/>
<dbReference type="HOGENOM" id="CLU_016423_3_1_1"/>
<dbReference type="InParanoid" id="P34653"/>
<dbReference type="OMA" id="YVFHSVD"/>
<dbReference type="OrthoDB" id="204958at2759"/>
<dbReference type="PhylomeDB" id="P34653"/>
<dbReference type="PRO" id="PR:P34653"/>
<dbReference type="Proteomes" id="UP000001940">
    <property type="component" value="Chromosome III"/>
</dbReference>
<dbReference type="Bgee" id="WBGene00014015">
    <property type="expression patterns" value="Expressed in embryo and 4 other cell types or tissues"/>
</dbReference>
<dbReference type="GO" id="GO:0000932">
    <property type="term" value="C:P-body"/>
    <property type="evidence" value="ECO:0000318"/>
    <property type="project" value="GO_Central"/>
</dbReference>
<dbReference type="GO" id="GO:0031251">
    <property type="term" value="C:PAN complex"/>
    <property type="evidence" value="ECO:0000318"/>
    <property type="project" value="GO_Central"/>
</dbReference>
<dbReference type="GO" id="GO:0005524">
    <property type="term" value="F:ATP binding"/>
    <property type="evidence" value="ECO:0007669"/>
    <property type="project" value="UniProtKB-UniRule"/>
</dbReference>
<dbReference type="GO" id="GO:0008143">
    <property type="term" value="F:poly(A) binding"/>
    <property type="evidence" value="ECO:0000318"/>
    <property type="project" value="GO_Central"/>
</dbReference>
<dbReference type="GO" id="GO:0006397">
    <property type="term" value="P:mRNA processing"/>
    <property type="evidence" value="ECO:0007669"/>
    <property type="project" value="UniProtKB-KW"/>
</dbReference>
<dbReference type="GO" id="GO:0000289">
    <property type="term" value="P:nuclear-transcribed mRNA poly(A) tail shortening"/>
    <property type="evidence" value="ECO:0000318"/>
    <property type="project" value="GO_Central"/>
</dbReference>
<dbReference type="GO" id="GO:0010606">
    <property type="term" value="P:positive regulation of cytoplasmic mRNA processing body assembly"/>
    <property type="evidence" value="ECO:0007669"/>
    <property type="project" value="UniProtKB-UniRule"/>
</dbReference>
<dbReference type="GO" id="GO:0022414">
    <property type="term" value="P:reproductive process"/>
    <property type="evidence" value="ECO:0000315"/>
    <property type="project" value="WormBase"/>
</dbReference>
<dbReference type="FunFam" id="1.10.287.3700:FF:000001">
    <property type="entry name" value="PAN2-PAN3 deadenylation complex subunit PAN3"/>
    <property type="match status" value="1"/>
</dbReference>
<dbReference type="FunFam" id="1.10.510.10:FF:001671">
    <property type="entry name" value="PAN2-PAN3 deadenylation complex subunit PAN3"/>
    <property type="match status" value="1"/>
</dbReference>
<dbReference type="Gene3D" id="1.10.287.3700">
    <property type="match status" value="1"/>
</dbReference>
<dbReference type="Gene3D" id="1.20.5.5160">
    <property type="match status" value="1"/>
</dbReference>
<dbReference type="Gene3D" id="1.10.510.10">
    <property type="entry name" value="Transferase(Phosphotransferase) domain 1"/>
    <property type="match status" value="1"/>
</dbReference>
<dbReference type="HAMAP" id="MF_03181">
    <property type="entry name" value="PAN3"/>
    <property type="match status" value="1"/>
</dbReference>
<dbReference type="InterPro" id="IPR011009">
    <property type="entry name" value="Kinase-like_dom_sf"/>
</dbReference>
<dbReference type="InterPro" id="IPR030844">
    <property type="entry name" value="PAN3"/>
</dbReference>
<dbReference type="InterPro" id="IPR041332">
    <property type="entry name" value="Pan3_PK"/>
</dbReference>
<dbReference type="PANTHER" id="PTHR12272">
    <property type="entry name" value="DEADENYLATION COMPLEX SUBUNIT PAN3"/>
    <property type="match status" value="1"/>
</dbReference>
<dbReference type="PANTHER" id="PTHR12272:SF11">
    <property type="entry name" value="PAN2-PAN3 DEADENYLATION COMPLEX SUBUNIT PAN3"/>
    <property type="match status" value="1"/>
</dbReference>
<dbReference type="Pfam" id="PF18101">
    <property type="entry name" value="Pan3_PK"/>
    <property type="match status" value="1"/>
</dbReference>
<dbReference type="SUPFAM" id="SSF56112">
    <property type="entry name" value="Protein kinase-like (PK-like)"/>
    <property type="match status" value="1"/>
</dbReference>
<name>PAN3_CAEEL</name>
<gene>
    <name evidence="5" type="primary">panl-3</name>
    <name evidence="1" type="synonym">PAN3</name>
    <name evidence="5" type="ORF">ZK632.7</name>
</gene>